<accession>P0CAZ6</accession>
<keyword id="KW-0044">Antibiotic</keyword>
<keyword id="KW-0929">Antimicrobial</keyword>
<keyword id="KW-0204">Cytolysis</keyword>
<keyword id="KW-0354">Hemolysis</keyword>
<keyword id="KW-0964">Secreted</keyword>
<keyword id="KW-0732">Signal</keyword>
<keyword id="KW-0800">Toxin</keyword>
<proteinExistence type="evidence at transcript level"/>
<protein>
    <recommendedName>
        <fullName>M-zodatoxin-Lt8m</fullName>
        <shortName>M-ZDTX-Lt8m</shortName>
    </recommendedName>
    <alternativeName>
        <fullName>Cytoinsectotoxin 1-13</fullName>
    </alternativeName>
</protein>
<dbReference type="SMR" id="P0CAZ6"/>
<dbReference type="ArachnoServer" id="AS000767">
    <property type="toxin name" value="M-zodatoxin-Lt8m"/>
</dbReference>
<dbReference type="GO" id="GO:0005576">
    <property type="term" value="C:extracellular region"/>
    <property type="evidence" value="ECO:0007669"/>
    <property type="project" value="UniProtKB-SubCell"/>
</dbReference>
<dbReference type="GO" id="GO:0090729">
    <property type="term" value="F:toxin activity"/>
    <property type="evidence" value="ECO:0007669"/>
    <property type="project" value="UniProtKB-KW"/>
</dbReference>
<dbReference type="GO" id="GO:0042742">
    <property type="term" value="P:defense response to bacterium"/>
    <property type="evidence" value="ECO:0007669"/>
    <property type="project" value="UniProtKB-KW"/>
</dbReference>
<dbReference type="GO" id="GO:0031640">
    <property type="term" value="P:killing of cells of another organism"/>
    <property type="evidence" value="ECO:0007669"/>
    <property type="project" value="UniProtKB-KW"/>
</dbReference>
<dbReference type="InterPro" id="IPR018802">
    <property type="entry name" value="Latarcin_precursor"/>
</dbReference>
<dbReference type="Pfam" id="PF10279">
    <property type="entry name" value="Latarcin"/>
    <property type="match status" value="1"/>
</dbReference>
<gene>
    <name type="primary">cit 1-13</name>
</gene>
<name>CT113_LACTA</name>
<reference key="1">
    <citation type="journal article" date="2008" name="Biochem. J.">
        <title>Cyto-insectotoxins, a novel class of cytolytic and insecticidal peptides from spider venom.</title>
        <authorList>
            <person name="Vassilevski A.A."/>
            <person name="Kozlov S.A."/>
            <person name="Samsonova O.V."/>
            <person name="Egorova N.S."/>
            <person name="Karpunin D.V."/>
            <person name="Pluzhnikov K.A."/>
            <person name="Feofanov A.V."/>
            <person name="Grishin E.V."/>
        </authorList>
    </citation>
    <scope>NUCLEOTIDE SEQUENCE [MRNA]</scope>
    <source>
        <tissue>Venom gland</tissue>
    </source>
</reference>
<evidence type="ECO:0000250" key="1"/>
<evidence type="ECO:0000255" key="2"/>
<evidence type="ECO:0000305" key="3"/>
<organism>
    <name type="scientific">Lachesana tarabaevi</name>
    <name type="common">Spider</name>
    <dbReference type="NCBI Taxonomy" id="379576"/>
    <lineage>
        <taxon>Eukaryota</taxon>
        <taxon>Metazoa</taxon>
        <taxon>Ecdysozoa</taxon>
        <taxon>Arthropoda</taxon>
        <taxon>Chelicerata</taxon>
        <taxon>Arachnida</taxon>
        <taxon>Araneae</taxon>
        <taxon>Araneomorphae</taxon>
        <taxon>Entelegynae</taxon>
        <taxon>Entelegynae incertae sedis</taxon>
        <taxon>Zodariidae</taxon>
        <taxon>Lachesana</taxon>
    </lineage>
</organism>
<comment type="function">
    <text evidence="1">Insecticidal, cytolytic and antimicrobial peptide. Forms voltage-dependent, ion-permeable channels in membranes. At high concentration causes cell membrane lysis (By similarity).</text>
</comment>
<comment type="subcellular location">
    <subcellularLocation>
        <location evidence="1">Secreted</location>
    </subcellularLocation>
</comment>
<comment type="tissue specificity">
    <text>Expressed by the venom gland.</text>
</comment>
<comment type="similarity">
    <text evidence="3">Belongs to the cationic peptide 06 (cytoinsectotoxin) family.</text>
</comment>
<sequence>MKYFVVALALVAAFACIAESKPAESEHELAEVEEENELADLEDAVWLEHLADLSDLEEARGFFGNTWKKIKGKADKIMLKKAVKIMVKKEGISKEEAQAKVDAMSKKQIRLYLLKHYGKKLFKKRPKNCDQ</sequence>
<feature type="signal peptide" evidence="2">
    <location>
        <begin position="1"/>
        <end position="20"/>
    </location>
</feature>
<feature type="propeptide" id="PRO_0000380145" evidence="1">
    <location>
        <begin position="21"/>
        <end position="60"/>
    </location>
</feature>
<feature type="chain" id="PRO_0000380146" description="M-zodatoxin-Lt8m">
    <location>
        <begin position="61"/>
        <end position="131"/>
    </location>
</feature>